<protein>
    <recommendedName>
        <fullName evidence="1">UPF0305 protein MK0666</fullName>
    </recommendedName>
</protein>
<feature type="chain" id="PRO_0000141704" description="UPF0305 protein MK0666">
    <location>
        <begin position="1"/>
        <end position="142"/>
    </location>
</feature>
<evidence type="ECO:0000255" key="1">
    <source>
        <dbReference type="HAMAP-Rule" id="MF_00763"/>
    </source>
</evidence>
<proteinExistence type="inferred from homology"/>
<dbReference type="EMBL" id="AE009439">
    <property type="protein sequence ID" value="AAM01881.1"/>
    <property type="molecule type" value="Genomic_DNA"/>
</dbReference>
<dbReference type="SMR" id="Q8TXK6"/>
<dbReference type="FunCoup" id="Q8TXK6">
    <property type="interactions" value="1"/>
</dbReference>
<dbReference type="STRING" id="190192.MK0666"/>
<dbReference type="PaxDb" id="190192-MK0666"/>
<dbReference type="EnsemblBacteria" id="AAM01881">
    <property type="protein sequence ID" value="AAM01881"/>
    <property type="gene ID" value="MK0666"/>
</dbReference>
<dbReference type="KEGG" id="mka:MK0666"/>
<dbReference type="HOGENOM" id="CLU_089549_1_0_2"/>
<dbReference type="InParanoid" id="Q8TXK6"/>
<dbReference type="Proteomes" id="UP000001826">
    <property type="component" value="Chromosome"/>
</dbReference>
<dbReference type="HAMAP" id="MF_00763">
    <property type="entry name" value="UPF0305"/>
    <property type="match status" value="1"/>
</dbReference>
<dbReference type="InterPro" id="IPR019215">
    <property type="entry name" value="DUF2115"/>
</dbReference>
<dbReference type="Pfam" id="PF09888">
    <property type="entry name" value="DUF2115"/>
    <property type="match status" value="1"/>
</dbReference>
<dbReference type="PIRSF" id="PIRSF004959">
    <property type="entry name" value="UCP004959"/>
    <property type="match status" value="1"/>
</dbReference>
<keyword id="KW-1185">Reference proteome</keyword>
<accession>Q8TXK6</accession>
<sequence length="142" mass="16721">MLRRDAWRQARFVHPRSYREKILRSLFFALTARINQMRRLDPEEYPEDPIEGYDRFLEIVREYAEDPDYDSPLLLLYESLSAAYAIFLRGEPVHPPGTEFPGVGKVRRTDDCYYCPIKERREDQPGSFCTLCPAEQDPEVVS</sequence>
<gene>
    <name type="ordered locus">MK0666</name>
</gene>
<reference key="1">
    <citation type="journal article" date="2002" name="Proc. Natl. Acad. Sci. U.S.A.">
        <title>The complete genome of hyperthermophile Methanopyrus kandleri AV19 and monophyly of archaeal methanogens.</title>
        <authorList>
            <person name="Slesarev A.I."/>
            <person name="Mezhevaya K.V."/>
            <person name="Makarova K.S."/>
            <person name="Polushin N.N."/>
            <person name="Shcherbinina O.V."/>
            <person name="Shakhova V.V."/>
            <person name="Belova G.I."/>
            <person name="Aravind L."/>
            <person name="Natale D.A."/>
            <person name="Rogozin I.B."/>
            <person name="Tatusov R.L."/>
            <person name="Wolf Y.I."/>
            <person name="Stetter K.O."/>
            <person name="Malykh A.G."/>
            <person name="Koonin E.V."/>
            <person name="Kozyavkin S.A."/>
        </authorList>
    </citation>
    <scope>NUCLEOTIDE SEQUENCE [LARGE SCALE GENOMIC DNA]</scope>
    <source>
        <strain>AV19 / DSM 6324 / JCM 9639 / NBRC 100938</strain>
    </source>
</reference>
<comment type="similarity">
    <text evidence="1">Belongs to the UPF0305 family.</text>
</comment>
<name>Y666_METKA</name>
<organism>
    <name type="scientific">Methanopyrus kandleri (strain AV19 / DSM 6324 / JCM 9639 / NBRC 100938)</name>
    <dbReference type="NCBI Taxonomy" id="190192"/>
    <lineage>
        <taxon>Archaea</taxon>
        <taxon>Methanobacteriati</taxon>
        <taxon>Methanobacteriota</taxon>
        <taxon>Methanomada group</taxon>
        <taxon>Methanopyri</taxon>
        <taxon>Methanopyrales</taxon>
        <taxon>Methanopyraceae</taxon>
        <taxon>Methanopyrus</taxon>
    </lineage>
</organism>